<reference key="1">
    <citation type="journal article" date="2009" name="J. Bacteriol.">
        <title>Genome sequences of three Agrobacterium biovars help elucidate the evolution of multichromosome genomes in bacteria.</title>
        <authorList>
            <person name="Slater S.C."/>
            <person name="Goldman B.S."/>
            <person name="Goodner B."/>
            <person name="Setubal J.C."/>
            <person name="Farrand S.K."/>
            <person name="Nester E.W."/>
            <person name="Burr T.J."/>
            <person name="Banta L."/>
            <person name="Dickerman A.W."/>
            <person name="Paulsen I."/>
            <person name="Otten L."/>
            <person name="Suen G."/>
            <person name="Welch R."/>
            <person name="Almeida N.F."/>
            <person name="Arnold F."/>
            <person name="Burton O.T."/>
            <person name="Du Z."/>
            <person name="Ewing A."/>
            <person name="Godsy E."/>
            <person name="Heisel S."/>
            <person name="Houmiel K.L."/>
            <person name="Jhaveri J."/>
            <person name="Lu J."/>
            <person name="Miller N.M."/>
            <person name="Norton S."/>
            <person name="Chen Q."/>
            <person name="Phoolcharoen W."/>
            <person name="Ohlin V."/>
            <person name="Ondrusek D."/>
            <person name="Pride N."/>
            <person name="Stricklin S.L."/>
            <person name="Sun J."/>
            <person name="Wheeler C."/>
            <person name="Wilson L."/>
            <person name="Zhu H."/>
            <person name="Wood D.W."/>
        </authorList>
    </citation>
    <scope>NUCLEOTIDE SEQUENCE [LARGE SCALE GENOMIC DNA]</scope>
    <source>
        <strain>ATCC BAA-846 / DSM 112012 / S4</strain>
    </source>
</reference>
<feature type="chain" id="PRO_1000192953" description="Peptidyl-tRNA hydrolase">
    <location>
        <begin position="1"/>
        <end position="234"/>
    </location>
</feature>
<feature type="region of interest" description="Disordered" evidence="2">
    <location>
        <begin position="187"/>
        <end position="234"/>
    </location>
</feature>
<feature type="active site" description="Proton acceptor" evidence="1">
    <location>
        <position position="19"/>
    </location>
</feature>
<feature type="binding site" evidence="1">
    <location>
        <position position="14"/>
    </location>
    <ligand>
        <name>tRNA</name>
        <dbReference type="ChEBI" id="CHEBI:17843"/>
    </ligand>
</feature>
<feature type="binding site" evidence="1">
    <location>
        <position position="64"/>
    </location>
    <ligand>
        <name>tRNA</name>
        <dbReference type="ChEBI" id="CHEBI:17843"/>
    </ligand>
</feature>
<feature type="binding site" evidence="1">
    <location>
        <position position="66"/>
    </location>
    <ligand>
        <name>tRNA</name>
        <dbReference type="ChEBI" id="CHEBI:17843"/>
    </ligand>
</feature>
<feature type="binding site" evidence="1">
    <location>
        <position position="112"/>
    </location>
    <ligand>
        <name>tRNA</name>
        <dbReference type="ChEBI" id="CHEBI:17843"/>
    </ligand>
</feature>
<feature type="site" description="Discriminates between blocked and unblocked aminoacyl-tRNA" evidence="1">
    <location>
        <position position="9"/>
    </location>
</feature>
<feature type="site" description="Stabilizes the basic form of H active site to accept a proton" evidence="1">
    <location>
        <position position="91"/>
    </location>
</feature>
<comment type="function">
    <text evidence="1">Hydrolyzes ribosome-free peptidyl-tRNAs (with 1 or more amino acids incorporated), which drop off the ribosome during protein synthesis, or as a result of ribosome stalling.</text>
</comment>
<comment type="function">
    <text evidence="1">Catalyzes the release of premature peptidyl moieties from peptidyl-tRNA molecules trapped in stalled 50S ribosomal subunits, and thus maintains levels of free tRNAs and 50S ribosomes.</text>
</comment>
<comment type="catalytic activity">
    <reaction evidence="1">
        <text>an N-acyl-L-alpha-aminoacyl-tRNA + H2O = an N-acyl-L-amino acid + a tRNA + H(+)</text>
        <dbReference type="Rhea" id="RHEA:54448"/>
        <dbReference type="Rhea" id="RHEA-COMP:10123"/>
        <dbReference type="Rhea" id="RHEA-COMP:13883"/>
        <dbReference type="ChEBI" id="CHEBI:15377"/>
        <dbReference type="ChEBI" id="CHEBI:15378"/>
        <dbReference type="ChEBI" id="CHEBI:59874"/>
        <dbReference type="ChEBI" id="CHEBI:78442"/>
        <dbReference type="ChEBI" id="CHEBI:138191"/>
        <dbReference type="EC" id="3.1.1.29"/>
    </reaction>
</comment>
<comment type="subunit">
    <text evidence="1">Monomer.</text>
</comment>
<comment type="subcellular location">
    <subcellularLocation>
        <location evidence="1">Cytoplasm</location>
    </subcellularLocation>
</comment>
<comment type="similarity">
    <text evidence="1">Belongs to the PTH family.</text>
</comment>
<protein>
    <recommendedName>
        <fullName evidence="1">Peptidyl-tRNA hydrolase</fullName>
        <shortName evidence="1">Pth</shortName>
        <ecNumber evidence="1">3.1.1.29</ecNumber>
    </recommendedName>
</protein>
<proteinExistence type="inferred from homology"/>
<name>PTH_ALLAM</name>
<dbReference type="EC" id="3.1.1.29" evidence="1"/>
<dbReference type="EMBL" id="CP000633">
    <property type="protein sequence ID" value="ACM37285.1"/>
    <property type="molecule type" value="Genomic_DNA"/>
</dbReference>
<dbReference type="RefSeq" id="WP_015916704.1">
    <property type="nucleotide sequence ID" value="NC_011989.1"/>
</dbReference>
<dbReference type="SMR" id="B9JZ39"/>
<dbReference type="STRING" id="311402.Avi_3190"/>
<dbReference type="KEGG" id="avi:Avi_3190"/>
<dbReference type="eggNOG" id="COG0193">
    <property type="taxonomic scope" value="Bacteria"/>
</dbReference>
<dbReference type="HOGENOM" id="CLU_062456_1_1_5"/>
<dbReference type="Proteomes" id="UP000001596">
    <property type="component" value="Chromosome 1"/>
</dbReference>
<dbReference type="GO" id="GO:0005737">
    <property type="term" value="C:cytoplasm"/>
    <property type="evidence" value="ECO:0007669"/>
    <property type="project" value="UniProtKB-SubCell"/>
</dbReference>
<dbReference type="GO" id="GO:0004045">
    <property type="term" value="F:peptidyl-tRNA hydrolase activity"/>
    <property type="evidence" value="ECO:0007669"/>
    <property type="project" value="UniProtKB-UniRule"/>
</dbReference>
<dbReference type="GO" id="GO:0000049">
    <property type="term" value="F:tRNA binding"/>
    <property type="evidence" value="ECO:0007669"/>
    <property type="project" value="UniProtKB-UniRule"/>
</dbReference>
<dbReference type="GO" id="GO:0006515">
    <property type="term" value="P:protein quality control for misfolded or incompletely synthesized proteins"/>
    <property type="evidence" value="ECO:0007669"/>
    <property type="project" value="UniProtKB-UniRule"/>
</dbReference>
<dbReference type="GO" id="GO:0072344">
    <property type="term" value="P:rescue of stalled ribosome"/>
    <property type="evidence" value="ECO:0007669"/>
    <property type="project" value="UniProtKB-UniRule"/>
</dbReference>
<dbReference type="CDD" id="cd00462">
    <property type="entry name" value="PTH"/>
    <property type="match status" value="1"/>
</dbReference>
<dbReference type="FunFam" id="3.40.50.1470:FF:000001">
    <property type="entry name" value="Peptidyl-tRNA hydrolase"/>
    <property type="match status" value="1"/>
</dbReference>
<dbReference type="Gene3D" id="3.40.50.1470">
    <property type="entry name" value="Peptidyl-tRNA hydrolase"/>
    <property type="match status" value="1"/>
</dbReference>
<dbReference type="HAMAP" id="MF_00083">
    <property type="entry name" value="Pept_tRNA_hydro_bact"/>
    <property type="match status" value="1"/>
</dbReference>
<dbReference type="InterPro" id="IPR001328">
    <property type="entry name" value="Pept_tRNA_hydro"/>
</dbReference>
<dbReference type="InterPro" id="IPR018171">
    <property type="entry name" value="Pept_tRNA_hydro_CS"/>
</dbReference>
<dbReference type="InterPro" id="IPR036416">
    <property type="entry name" value="Pept_tRNA_hydro_sf"/>
</dbReference>
<dbReference type="NCBIfam" id="TIGR00447">
    <property type="entry name" value="pth"/>
    <property type="match status" value="1"/>
</dbReference>
<dbReference type="PANTHER" id="PTHR17224">
    <property type="entry name" value="PEPTIDYL-TRNA HYDROLASE"/>
    <property type="match status" value="1"/>
</dbReference>
<dbReference type="PANTHER" id="PTHR17224:SF1">
    <property type="entry name" value="PEPTIDYL-TRNA HYDROLASE"/>
    <property type="match status" value="1"/>
</dbReference>
<dbReference type="Pfam" id="PF01195">
    <property type="entry name" value="Pept_tRNA_hydro"/>
    <property type="match status" value="1"/>
</dbReference>
<dbReference type="SUPFAM" id="SSF53178">
    <property type="entry name" value="Peptidyl-tRNA hydrolase-like"/>
    <property type="match status" value="1"/>
</dbReference>
<dbReference type="PROSITE" id="PS01195">
    <property type="entry name" value="PEPT_TRNA_HYDROL_1"/>
    <property type="match status" value="1"/>
</dbReference>
<dbReference type="PROSITE" id="PS01196">
    <property type="entry name" value="PEPT_TRNA_HYDROL_2"/>
    <property type="match status" value="1"/>
</dbReference>
<evidence type="ECO:0000255" key="1">
    <source>
        <dbReference type="HAMAP-Rule" id="MF_00083"/>
    </source>
</evidence>
<evidence type="ECO:0000256" key="2">
    <source>
        <dbReference type="SAM" id="MobiDB-lite"/>
    </source>
</evidence>
<gene>
    <name evidence="1" type="primary">pth</name>
    <name type="ordered locus">Avi_3190</name>
</gene>
<organism>
    <name type="scientific">Allorhizobium ampelinum (strain ATCC BAA-846 / DSM 112012 / S4)</name>
    <name type="common">Agrobacterium vitis (strain S4)</name>
    <dbReference type="NCBI Taxonomy" id="311402"/>
    <lineage>
        <taxon>Bacteria</taxon>
        <taxon>Pseudomonadati</taxon>
        <taxon>Pseudomonadota</taxon>
        <taxon>Alphaproteobacteria</taxon>
        <taxon>Hyphomicrobiales</taxon>
        <taxon>Rhizobiaceae</taxon>
        <taxon>Rhizobium/Agrobacterium group</taxon>
        <taxon>Allorhizobium</taxon>
        <taxon>Allorhizobium ampelinum</taxon>
    </lineage>
</organism>
<keyword id="KW-0963">Cytoplasm</keyword>
<keyword id="KW-0378">Hydrolase</keyword>
<keyword id="KW-1185">Reference proteome</keyword>
<keyword id="KW-0694">RNA-binding</keyword>
<keyword id="KW-0820">tRNA-binding</keyword>
<accession>B9JZ39</accession>
<sequence>MIVLAGLGNPGSQYAGNRHNIGFMALDAIHRRHSFSPWSKKFKAEIADGTLAGEKVLLIKPQTFMNLSGESVGEALRFYKLGPEQLVAIYDELDLLPGKARIKLGGGHGGHNGIKSLDAHCGLNYRRLRLGIGHPGDKSRVQAHVLGDFGKLDAEWLDPLLETLAENADMLVRGEDSQLMNKLALATGTKADEEKPKPAKSHIHQARNGVQPKKLPETGPMAEMLKKMFGPKKD</sequence>